<dbReference type="EC" id="3.2.1.52" evidence="1"/>
<dbReference type="EMBL" id="AL590842">
    <property type="protein sequence ID" value="CAL20260.1"/>
    <property type="molecule type" value="Genomic_DNA"/>
</dbReference>
<dbReference type="EMBL" id="AE009952">
    <property type="protein sequence ID" value="AAM85342.1"/>
    <property type="status" value="ALT_INIT"/>
    <property type="molecule type" value="Genomic_DNA"/>
</dbReference>
<dbReference type="EMBL" id="AE017042">
    <property type="protein sequence ID" value="AAS62445.1"/>
    <property type="status" value="ALT_INIT"/>
    <property type="molecule type" value="Genomic_DNA"/>
</dbReference>
<dbReference type="PIR" id="AB0197">
    <property type="entry name" value="AB0197"/>
</dbReference>
<dbReference type="RefSeq" id="YP_002346626.1">
    <property type="nucleotide sequence ID" value="NC_003143.1"/>
</dbReference>
<dbReference type="SMR" id="Q8ZFS3"/>
<dbReference type="STRING" id="214092.YPO1615"/>
<dbReference type="CAZy" id="GH3">
    <property type="family name" value="Glycoside Hydrolase Family 3"/>
</dbReference>
<dbReference type="PaxDb" id="214092-YPO1615"/>
<dbReference type="DNASU" id="1146721"/>
<dbReference type="EnsemblBacteria" id="AAS62445">
    <property type="protein sequence ID" value="AAS62445"/>
    <property type="gene ID" value="YP_2239"/>
</dbReference>
<dbReference type="KEGG" id="ype:YPO1615"/>
<dbReference type="KEGG" id="ypk:y1775"/>
<dbReference type="KEGG" id="ypm:YP_2239"/>
<dbReference type="PATRIC" id="fig|214092.21.peg.1958"/>
<dbReference type="eggNOG" id="COG1472">
    <property type="taxonomic scope" value="Bacteria"/>
</dbReference>
<dbReference type="HOGENOM" id="CLU_008392_0_0_6"/>
<dbReference type="OMA" id="WQMAAEM"/>
<dbReference type="OrthoDB" id="9786661at2"/>
<dbReference type="UniPathway" id="UPA00544"/>
<dbReference type="Proteomes" id="UP000000815">
    <property type="component" value="Chromosome"/>
</dbReference>
<dbReference type="Proteomes" id="UP000001019">
    <property type="component" value="Chromosome"/>
</dbReference>
<dbReference type="Proteomes" id="UP000002490">
    <property type="component" value="Chromosome"/>
</dbReference>
<dbReference type="GO" id="GO:0005829">
    <property type="term" value="C:cytosol"/>
    <property type="evidence" value="ECO:0000318"/>
    <property type="project" value="GO_Central"/>
</dbReference>
<dbReference type="GO" id="GO:0016231">
    <property type="term" value="F:beta-N-acetylglucosaminidase activity"/>
    <property type="evidence" value="ECO:0000318"/>
    <property type="project" value="GO_Central"/>
</dbReference>
<dbReference type="GO" id="GO:0005975">
    <property type="term" value="P:carbohydrate metabolic process"/>
    <property type="evidence" value="ECO:0007669"/>
    <property type="project" value="InterPro"/>
</dbReference>
<dbReference type="GO" id="GO:0051301">
    <property type="term" value="P:cell division"/>
    <property type="evidence" value="ECO:0007669"/>
    <property type="project" value="UniProtKB-KW"/>
</dbReference>
<dbReference type="GO" id="GO:0071555">
    <property type="term" value="P:cell wall organization"/>
    <property type="evidence" value="ECO:0007669"/>
    <property type="project" value="UniProtKB-KW"/>
</dbReference>
<dbReference type="GO" id="GO:0009252">
    <property type="term" value="P:peptidoglycan biosynthetic process"/>
    <property type="evidence" value="ECO:0007669"/>
    <property type="project" value="UniProtKB-KW"/>
</dbReference>
<dbReference type="GO" id="GO:0009254">
    <property type="term" value="P:peptidoglycan turnover"/>
    <property type="evidence" value="ECO:0000318"/>
    <property type="project" value="GO_Central"/>
</dbReference>
<dbReference type="GO" id="GO:0008360">
    <property type="term" value="P:regulation of cell shape"/>
    <property type="evidence" value="ECO:0007669"/>
    <property type="project" value="UniProtKB-KW"/>
</dbReference>
<dbReference type="FunFam" id="3.20.20.300:FF:000001">
    <property type="entry name" value="Beta-hexosaminidase"/>
    <property type="match status" value="1"/>
</dbReference>
<dbReference type="Gene3D" id="3.20.20.300">
    <property type="entry name" value="Glycoside hydrolase, family 3, N-terminal domain"/>
    <property type="match status" value="1"/>
</dbReference>
<dbReference type="HAMAP" id="MF_00364">
    <property type="entry name" value="NagZ"/>
    <property type="match status" value="1"/>
</dbReference>
<dbReference type="InterPro" id="IPR022956">
    <property type="entry name" value="Beta_hexosaminidase_bac"/>
</dbReference>
<dbReference type="InterPro" id="IPR019800">
    <property type="entry name" value="Glyco_hydro_3_AS"/>
</dbReference>
<dbReference type="InterPro" id="IPR001764">
    <property type="entry name" value="Glyco_hydro_3_N"/>
</dbReference>
<dbReference type="InterPro" id="IPR036962">
    <property type="entry name" value="Glyco_hydro_3_N_sf"/>
</dbReference>
<dbReference type="InterPro" id="IPR017853">
    <property type="entry name" value="Glycoside_hydrolase_SF"/>
</dbReference>
<dbReference type="InterPro" id="IPR050226">
    <property type="entry name" value="NagZ_Beta-hexosaminidase"/>
</dbReference>
<dbReference type="NCBIfam" id="NF003740">
    <property type="entry name" value="PRK05337.1"/>
    <property type="match status" value="1"/>
</dbReference>
<dbReference type="PANTHER" id="PTHR30480:SF13">
    <property type="entry name" value="BETA-HEXOSAMINIDASE"/>
    <property type="match status" value="1"/>
</dbReference>
<dbReference type="PANTHER" id="PTHR30480">
    <property type="entry name" value="BETA-HEXOSAMINIDASE-RELATED"/>
    <property type="match status" value="1"/>
</dbReference>
<dbReference type="Pfam" id="PF00933">
    <property type="entry name" value="Glyco_hydro_3"/>
    <property type="match status" value="1"/>
</dbReference>
<dbReference type="SUPFAM" id="SSF51445">
    <property type="entry name" value="(Trans)glycosidases"/>
    <property type="match status" value="1"/>
</dbReference>
<dbReference type="PROSITE" id="PS00775">
    <property type="entry name" value="GLYCOSYL_HYDROL_F3"/>
    <property type="match status" value="1"/>
</dbReference>
<sequence>MGPVMLDVASYELDAEEREILKHPLVGGLILFSRNFHDAEQLRELVRQIRAASHERLVVAVDQEGGRVQRFRDGFTRLPAAQYFAAINDAATAAQLAQEAGWLMAAEMMAMDIDISFAPVLDIGHVSAAIGERSFHSDPQQARIMAECFIRGMHSAGMKTTGKHFPGHGAVTADSHKETPHDNRPLAEIRTHDMVIFRELIQRKLLDAIMPAHVIYTEADARPASGSAYWLQEILRQELGFEGIIFSDDLSMEGAAIMGSYAERGQASLDAGCDMILVCNNRQGAVSVLDNLSPIKADQLTRLYHSGQFDRQTLMASSRWQQANKALTALSERWDAHKQTLGQ</sequence>
<name>NAGZ_YERPE</name>
<proteinExistence type="inferred from homology"/>
<evidence type="ECO:0000255" key="1">
    <source>
        <dbReference type="HAMAP-Rule" id="MF_00364"/>
    </source>
</evidence>
<evidence type="ECO:0000305" key="2"/>
<organism>
    <name type="scientific">Yersinia pestis</name>
    <dbReference type="NCBI Taxonomy" id="632"/>
    <lineage>
        <taxon>Bacteria</taxon>
        <taxon>Pseudomonadati</taxon>
        <taxon>Pseudomonadota</taxon>
        <taxon>Gammaproteobacteria</taxon>
        <taxon>Enterobacterales</taxon>
        <taxon>Yersiniaceae</taxon>
        <taxon>Yersinia</taxon>
    </lineage>
</organism>
<reference key="1">
    <citation type="journal article" date="2001" name="Nature">
        <title>Genome sequence of Yersinia pestis, the causative agent of plague.</title>
        <authorList>
            <person name="Parkhill J."/>
            <person name="Wren B.W."/>
            <person name="Thomson N.R."/>
            <person name="Titball R.W."/>
            <person name="Holden M.T.G."/>
            <person name="Prentice M.B."/>
            <person name="Sebaihia M."/>
            <person name="James K.D."/>
            <person name="Churcher C.M."/>
            <person name="Mungall K.L."/>
            <person name="Baker S."/>
            <person name="Basham D."/>
            <person name="Bentley S.D."/>
            <person name="Brooks K."/>
            <person name="Cerdeno-Tarraga A.-M."/>
            <person name="Chillingworth T."/>
            <person name="Cronin A."/>
            <person name="Davies R.M."/>
            <person name="Davis P."/>
            <person name="Dougan G."/>
            <person name="Feltwell T."/>
            <person name="Hamlin N."/>
            <person name="Holroyd S."/>
            <person name="Jagels K."/>
            <person name="Karlyshev A.V."/>
            <person name="Leather S."/>
            <person name="Moule S."/>
            <person name="Oyston P.C.F."/>
            <person name="Quail M.A."/>
            <person name="Rutherford K.M."/>
            <person name="Simmonds M."/>
            <person name="Skelton J."/>
            <person name="Stevens K."/>
            <person name="Whitehead S."/>
            <person name="Barrell B.G."/>
        </authorList>
    </citation>
    <scope>NUCLEOTIDE SEQUENCE [LARGE SCALE GENOMIC DNA]</scope>
    <source>
        <strain>CO-92 / Biovar Orientalis</strain>
    </source>
</reference>
<reference key="2">
    <citation type="journal article" date="2002" name="J. Bacteriol.">
        <title>Genome sequence of Yersinia pestis KIM.</title>
        <authorList>
            <person name="Deng W."/>
            <person name="Burland V."/>
            <person name="Plunkett G. III"/>
            <person name="Boutin A."/>
            <person name="Mayhew G.F."/>
            <person name="Liss P."/>
            <person name="Perna N.T."/>
            <person name="Rose D.J."/>
            <person name="Mau B."/>
            <person name="Zhou S."/>
            <person name="Schwartz D.C."/>
            <person name="Fetherston J.D."/>
            <person name="Lindler L.E."/>
            <person name="Brubaker R.R."/>
            <person name="Plano G.V."/>
            <person name="Straley S.C."/>
            <person name="McDonough K.A."/>
            <person name="Nilles M.L."/>
            <person name="Matson J.S."/>
            <person name="Blattner F.R."/>
            <person name="Perry R.D."/>
        </authorList>
    </citation>
    <scope>NUCLEOTIDE SEQUENCE [LARGE SCALE GENOMIC DNA]</scope>
    <source>
        <strain>KIM10+ / Biovar Mediaevalis</strain>
    </source>
</reference>
<reference key="3">
    <citation type="journal article" date="2004" name="DNA Res.">
        <title>Complete genome sequence of Yersinia pestis strain 91001, an isolate avirulent to humans.</title>
        <authorList>
            <person name="Song Y."/>
            <person name="Tong Z."/>
            <person name="Wang J."/>
            <person name="Wang L."/>
            <person name="Guo Z."/>
            <person name="Han Y."/>
            <person name="Zhang J."/>
            <person name="Pei D."/>
            <person name="Zhou D."/>
            <person name="Qin H."/>
            <person name="Pang X."/>
            <person name="Han Y."/>
            <person name="Zhai J."/>
            <person name="Li M."/>
            <person name="Cui B."/>
            <person name="Qi Z."/>
            <person name="Jin L."/>
            <person name="Dai R."/>
            <person name="Chen F."/>
            <person name="Li S."/>
            <person name="Ye C."/>
            <person name="Du Z."/>
            <person name="Lin W."/>
            <person name="Wang J."/>
            <person name="Yu J."/>
            <person name="Yang H."/>
            <person name="Wang J."/>
            <person name="Huang P."/>
            <person name="Yang R."/>
        </authorList>
    </citation>
    <scope>NUCLEOTIDE SEQUENCE [LARGE SCALE GENOMIC DNA]</scope>
    <source>
        <strain>91001 / Biovar Mediaevalis</strain>
    </source>
</reference>
<keyword id="KW-0131">Cell cycle</keyword>
<keyword id="KW-0132">Cell division</keyword>
<keyword id="KW-0133">Cell shape</keyword>
<keyword id="KW-0961">Cell wall biogenesis/degradation</keyword>
<keyword id="KW-0963">Cytoplasm</keyword>
<keyword id="KW-0326">Glycosidase</keyword>
<keyword id="KW-0378">Hydrolase</keyword>
<keyword id="KW-0573">Peptidoglycan synthesis</keyword>
<keyword id="KW-1185">Reference proteome</keyword>
<gene>
    <name evidence="1" type="primary">nagZ</name>
    <name type="ordered locus">YPO1615</name>
    <name type="ordered locus">y1775</name>
    <name type="ordered locus">YP_2239</name>
</gene>
<comment type="function">
    <text evidence="1">Plays a role in peptidoglycan recycling by cleaving the terminal beta-1,4-linked N-acetylglucosamine (GlcNAc) from peptide-linked peptidoglycan fragments, giving rise to free GlcNAc, anhydro-N-acetylmuramic acid and anhydro-N-acetylmuramic acid-linked peptides.</text>
</comment>
<comment type="catalytic activity">
    <reaction evidence="1">
        <text>Hydrolysis of terminal non-reducing N-acetyl-D-hexosamine residues in N-acetyl-beta-D-hexosaminides.</text>
        <dbReference type="EC" id="3.2.1.52"/>
    </reaction>
</comment>
<comment type="pathway">
    <text evidence="1">Cell wall biogenesis; peptidoglycan recycling.</text>
</comment>
<comment type="subcellular location">
    <subcellularLocation>
        <location evidence="1">Cytoplasm</location>
    </subcellularLocation>
</comment>
<comment type="similarity">
    <text evidence="1">Belongs to the glycosyl hydrolase 3 family. NagZ subfamily.</text>
</comment>
<comment type="sequence caution" evidence="2">
    <conflict type="erroneous initiation">
        <sequence resource="EMBL-CDS" id="AAM85342"/>
    </conflict>
</comment>
<comment type="sequence caution" evidence="2">
    <conflict type="erroneous initiation">
        <sequence resource="EMBL-CDS" id="AAS62445"/>
    </conflict>
</comment>
<feature type="chain" id="PRO_0000210806" description="Beta-hexosaminidase">
    <location>
        <begin position="1"/>
        <end position="343"/>
    </location>
</feature>
<feature type="active site" description="Proton donor/acceptor" evidence="1">
    <location>
        <position position="176"/>
    </location>
</feature>
<feature type="active site" description="Nucleophile" evidence="1">
    <location>
        <position position="248"/>
    </location>
</feature>
<feature type="binding site" evidence="1">
    <location>
        <position position="62"/>
    </location>
    <ligand>
        <name>substrate</name>
    </ligand>
</feature>
<feature type="binding site" evidence="1">
    <location>
        <position position="70"/>
    </location>
    <ligand>
        <name>substrate</name>
    </ligand>
</feature>
<feature type="binding site" evidence="1">
    <location>
        <position position="133"/>
    </location>
    <ligand>
        <name>substrate</name>
    </ligand>
</feature>
<feature type="binding site" evidence="1">
    <location>
        <begin position="163"/>
        <end position="164"/>
    </location>
    <ligand>
        <name>substrate</name>
    </ligand>
</feature>
<feature type="site" description="Important for catalytic activity" evidence="1">
    <location>
        <position position="174"/>
    </location>
</feature>
<accession>Q8ZFS3</accession>
<accession>Q0WGG2</accession>
<protein>
    <recommendedName>
        <fullName evidence="1">Beta-hexosaminidase</fullName>
        <ecNumber evidence="1">3.2.1.52</ecNumber>
    </recommendedName>
    <alternativeName>
        <fullName evidence="1">Beta-N-acetylhexosaminidase</fullName>
    </alternativeName>
    <alternativeName>
        <fullName evidence="1">N-acetyl-beta-glucosaminidase</fullName>
    </alternativeName>
</protein>